<proteinExistence type="inferred from homology"/>
<comment type="function">
    <text evidence="1">Involved in the biosynthesis of the iron-molybdenum cofactor (FeMo-co or M-cluster) found in the dinitrogenase enzyme of the nitrogenase complex in nitrogen-fixing microorganisms. NifB catalyzes the crucial step of radical SAM-dependent carbide insertion that occurs concomitant with the insertion of a 9th sulfur and the rearrangement/coupling of two [4Fe-4S] clusters into a [8Fe-9S-C] cluster, the precursor to the M-cluster.</text>
</comment>
<comment type="cofactor">
    <cofactor evidence="1">
        <name>[4Fe-4S] cluster</name>
        <dbReference type="ChEBI" id="CHEBI:49883"/>
    </cofactor>
    <text evidence="1">Binds 3 [4Fe-4S] clusters per monomer. One cluster is coordinated with 3 cysteines and an exchangeable S-adenosyl-L-methionine. The two others probably act as substrate.</text>
</comment>
<comment type="pathway">
    <text evidence="1">Cofactor biosynthesis; Fe-Mo cofactor biosynthesis.</text>
</comment>
<comment type="similarity">
    <text evidence="4">Belongs to the radical SAM superfamily. NifB family.</text>
</comment>
<gene>
    <name type="primary">nifB</name>
</gene>
<name>NIFB_RHILE</name>
<reference key="1">
    <citation type="journal article" date="1987" name="Nucleic Acids Res.">
        <title>Organization and partial sequence of a DNA region of the Rhizobium leguminosarum symbiotic plasmid pRL6JI containing the genes fixABC, nifA, nifB and a novel open reading frame.</title>
        <authorList>
            <person name="Groenger P."/>
            <person name="Manian S.S."/>
            <person name="Reilaender H."/>
            <person name="O'Connell M."/>
            <person name="Priefer U.B."/>
            <person name="Puehler A."/>
        </authorList>
    </citation>
    <scope>NUCLEOTIDE SEQUENCE [GENOMIC DNA]</scope>
</reference>
<feature type="chain" id="PRO_0000153043" description="FeMo cofactor biosynthesis protein NifB">
    <location>
        <begin position="1"/>
        <end position="162" status="greater than"/>
    </location>
</feature>
<feature type="domain" description="Radical SAM core" evidence="3">
    <location>
        <begin position="37"/>
        <end position="162" status="greater than"/>
    </location>
</feature>
<feature type="binding site" evidence="2">
    <location>
        <position position="51"/>
    </location>
    <ligand>
        <name>[4Fe-4S] cluster</name>
        <dbReference type="ChEBI" id="CHEBI:49883"/>
        <label>1</label>
        <note>4Fe-4S-S-AdoMet</note>
    </ligand>
</feature>
<feature type="binding site" evidence="2">
    <location>
        <position position="55"/>
    </location>
    <ligand>
        <name>[4Fe-4S] cluster</name>
        <dbReference type="ChEBI" id="CHEBI:49883"/>
        <label>1</label>
        <note>4Fe-4S-S-AdoMet</note>
    </ligand>
</feature>
<feature type="binding site" evidence="2">
    <location>
        <position position="57"/>
    </location>
    <ligand>
        <name>S-adenosyl-L-methionine</name>
        <dbReference type="ChEBI" id="CHEBI:59789"/>
    </ligand>
</feature>
<feature type="binding site" evidence="2">
    <location>
        <position position="58"/>
    </location>
    <ligand>
        <name>[4Fe-4S] cluster</name>
        <dbReference type="ChEBI" id="CHEBI:49883"/>
        <label>1</label>
        <note>4Fe-4S-S-AdoMet</note>
    </ligand>
</feature>
<feature type="binding site" evidence="2">
    <location>
        <position position="105"/>
    </location>
    <ligand>
        <name>S-adenosyl-L-methionine</name>
        <dbReference type="ChEBI" id="CHEBI:59789"/>
    </ligand>
</feature>
<feature type="binding site" evidence="2">
    <location>
        <position position="157"/>
    </location>
    <ligand>
        <name>S-adenosyl-L-methionine</name>
        <dbReference type="ChEBI" id="CHEBI:59789"/>
    </ligand>
</feature>
<feature type="non-terminal residue">
    <location>
        <position position="162"/>
    </location>
</feature>
<evidence type="ECO:0000250" key="1">
    <source>
        <dbReference type="UniProtKB" id="D5VRM1"/>
    </source>
</evidence>
<evidence type="ECO:0000250" key="2">
    <source>
        <dbReference type="UniProtKB" id="P69848"/>
    </source>
</evidence>
<evidence type="ECO:0000255" key="3">
    <source>
        <dbReference type="PROSITE-ProRule" id="PRU01266"/>
    </source>
</evidence>
<evidence type="ECO:0000305" key="4"/>
<geneLocation type="plasmid">
    <name>sym pRL6JI</name>
</geneLocation>
<accession>P09825</accession>
<protein>
    <recommendedName>
        <fullName>FeMo cofactor biosynthesis protein NifB</fullName>
        <ecNumber>4.-.-.-</ecNumber>
    </recommendedName>
    <alternativeName>
        <fullName>Nitrogenase cofactor maturase NifB</fullName>
    </alternativeName>
    <alternativeName>
        <fullName>Radical SAM assemblase NifB</fullName>
    </alternativeName>
</protein>
<keyword id="KW-0004">4Fe-4S</keyword>
<keyword id="KW-0408">Iron</keyword>
<keyword id="KW-0411">Iron-sulfur</keyword>
<keyword id="KW-0456">Lyase</keyword>
<keyword id="KW-0479">Metal-binding</keyword>
<keyword id="KW-0535">Nitrogen fixation</keyword>
<keyword id="KW-0614">Plasmid</keyword>
<keyword id="KW-0949">S-adenosyl-L-methionine</keyword>
<sequence>MPGGRASSSYGLSVTDDKDARIWERIKDHPCFSEQAHHYFARMHVAVAPACNIQCNYCNRKYDCTNESRPGVASVKLTPDQALRKVLAVASKVPELSVIGVAGPGDACYDWRKTAATFEGVAREIPDIKLCISTNGLALPDHVDELADMNVDHVTITINMVD</sequence>
<dbReference type="EC" id="4.-.-.-"/>
<dbReference type="EMBL" id="X05049">
    <property type="protein sequence ID" value="CAA28724.1"/>
    <property type="molecule type" value="Genomic_DNA"/>
</dbReference>
<dbReference type="PIR" id="D25878">
    <property type="entry name" value="D25878"/>
</dbReference>
<dbReference type="SMR" id="P09825"/>
<dbReference type="UniPathway" id="UPA00782"/>
<dbReference type="GO" id="GO:0051539">
    <property type="term" value="F:4 iron, 4 sulfur cluster binding"/>
    <property type="evidence" value="ECO:0007669"/>
    <property type="project" value="UniProtKB-KW"/>
</dbReference>
<dbReference type="GO" id="GO:0016829">
    <property type="term" value="F:lyase activity"/>
    <property type="evidence" value="ECO:0007669"/>
    <property type="project" value="UniProtKB-KW"/>
</dbReference>
<dbReference type="GO" id="GO:0046872">
    <property type="term" value="F:metal ion binding"/>
    <property type="evidence" value="ECO:0007669"/>
    <property type="project" value="UniProtKB-KW"/>
</dbReference>
<dbReference type="GO" id="GO:0009399">
    <property type="term" value="P:nitrogen fixation"/>
    <property type="evidence" value="ECO:0007669"/>
    <property type="project" value="UniProtKB-KW"/>
</dbReference>
<dbReference type="CDD" id="cd01335">
    <property type="entry name" value="Radical_SAM"/>
    <property type="match status" value="1"/>
</dbReference>
<dbReference type="Gene3D" id="3.20.20.70">
    <property type="entry name" value="Aldolase class I"/>
    <property type="match status" value="1"/>
</dbReference>
<dbReference type="InterPro" id="IPR013785">
    <property type="entry name" value="Aldolase_TIM"/>
</dbReference>
<dbReference type="InterPro" id="IPR000385">
    <property type="entry name" value="MoaA_NifB_PqqE_Fe-S-bd_CS"/>
</dbReference>
<dbReference type="InterPro" id="IPR007197">
    <property type="entry name" value="rSAM"/>
</dbReference>
<dbReference type="PANTHER" id="PTHR43787:SF13">
    <property type="entry name" value="FEMO COFACTOR BIOSYNTHESIS PROTEIN NIFB"/>
    <property type="match status" value="1"/>
</dbReference>
<dbReference type="PANTHER" id="PTHR43787">
    <property type="entry name" value="FEMO COFACTOR BIOSYNTHESIS PROTEIN NIFB-RELATED"/>
    <property type="match status" value="1"/>
</dbReference>
<dbReference type="Pfam" id="PF04055">
    <property type="entry name" value="Radical_SAM"/>
    <property type="match status" value="1"/>
</dbReference>
<dbReference type="SFLD" id="SFLDS00029">
    <property type="entry name" value="Radical_SAM"/>
    <property type="match status" value="1"/>
</dbReference>
<dbReference type="SUPFAM" id="SSF102114">
    <property type="entry name" value="Radical SAM enzymes"/>
    <property type="match status" value="1"/>
</dbReference>
<dbReference type="PROSITE" id="PS01305">
    <property type="entry name" value="MOAA_NIFB_PQQE"/>
    <property type="match status" value="1"/>
</dbReference>
<dbReference type="PROSITE" id="PS51918">
    <property type="entry name" value="RADICAL_SAM"/>
    <property type="match status" value="1"/>
</dbReference>
<organism>
    <name type="scientific">Rhizobium leguminosarum</name>
    <dbReference type="NCBI Taxonomy" id="384"/>
    <lineage>
        <taxon>Bacteria</taxon>
        <taxon>Pseudomonadati</taxon>
        <taxon>Pseudomonadota</taxon>
        <taxon>Alphaproteobacteria</taxon>
        <taxon>Hyphomicrobiales</taxon>
        <taxon>Rhizobiaceae</taxon>
        <taxon>Rhizobium/Agrobacterium group</taxon>
        <taxon>Rhizobium</taxon>
    </lineage>
</organism>